<organism>
    <name type="scientific">Escherichia coli O1:K1 / APEC</name>
    <dbReference type="NCBI Taxonomy" id="405955"/>
    <lineage>
        <taxon>Bacteria</taxon>
        <taxon>Pseudomonadati</taxon>
        <taxon>Pseudomonadota</taxon>
        <taxon>Gammaproteobacteria</taxon>
        <taxon>Enterobacterales</taxon>
        <taxon>Enterobacteriaceae</taxon>
        <taxon>Escherichia</taxon>
    </lineage>
</organism>
<dbReference type="EC" id="2.4.2.21" evidence="1"/>
<dbReference type="EMBL" id="CP000468">
    <property type="protein sequence ID" value="ABJ01378.1"/>
    <property type="molecule type" value="Genomic_DNA"/>
</dbReference>
<dbReference type="RefSeq" id="WP_001193830.1">
    <property type="nucleotide sequence ID" value="NZ_CADILS010000052.1"/>
</dbReference>
<dbReference type="SMR" id="A1ACI8"/>
<dbReference type="KEGG" id="ecv:APECO1_1072"/>
<dbReference type="HOGENOM" id="CLU_002982_0_0_6"/>
<dbReference type="UniPathway" id="UPA00061">
    <property type="reaction ID" value="UER00516"/>
</dbReference>
<dbReference type="Proteomes" id="UP000008216">
    <property type="component" value="Chromosome"/>
</dbReference>
<dbReference type="GO" id="GO:0008939">
    <property type="term" value="F:nicotinate-nucleotide-dimethylbenzimidazole phosphoribosyltransferase activity"/>
    <property type="evidence" value="ECO:0007669"/>
    <property type="project" value="UniProtKB-UniRule"/>
</dbReference>
<dbReference type="GO" id="GO:0009236">
    <property type="term" value="P:cobalamin biosynthetic process"/>
    <property type="evidence" value="ECO:0007669"/>
    <property type="project" value="UniProtKB-KW"/>
</dbReference>
<dbReference type="CDD" id="cd02439">
    <property type="entry name" value="DMB-PRT_CobT"/>
    <property type="match status" value="1"/>
</dbReference>
<dbReference type="FunFam" id="1.10.1610.10:FF:000001">
    <property type="entry name" value="Nicotinate-nucleotide--dimethylbenzimidazole phosphoribosyltransferase"/>
    <property type="match status" value="1"/>
</dbReference>
<dbReference type="FunFam" id="3.40.50.10210:FF:000001">
    <property type="entry name" value="Nicotinate-nucleotide--dimethylbenzimidazole phosphoribosyltransferase"/>
    <property type="match status" value="1"/>
</dbReference>
<dbReference type="Gene3D" id="1.10.1610.10">
    <property type="match status" value="1"/>
</dbReference>
<dbReference type="Gene3D" id="3.40.50.10210">
    <property type="match status" value="1"/>
</dbReference>
<dbReference type="HAMAP" id="MF_00230">
    <property type="entry name" value="CobT"/>
    <property type="match status" value="1"/>
</dbReference>
<dbReference type="InterPro" id="IPR003200">
    <property type="entry name" value="Nict_dMeBzImd_PRibTrfase"/>
</dbReference>
<dbReference type="InterPro" id="IPR017846">
    <property type="entry name" value="Nict_dMeBzImd_PRibTrfase_bact"/>
</dbReference>
<dbReference type="InterPro" id="IPR023195">
    <property type="entry name" value="Nict_dMeBzImd_PRibTrfase_N"/>
</dbReference>
<dbReference type="InterPro" id="IPR036087">
    <property type="entry name" value="Nict_dMeBzImd_PRibTrfase_sf"/>
</dbReference>
<dbReference type="NCBIfam" id="TIGR03160">
    <property type="entry name" value="cobT_DBIPRT"/>
    <property type="match status" value="1"/>
</dbReference>
<dbReference type="NCBIfam" id="NF000996">
    <property type="entry name" value="PRK00105.1"/>
    <property type="match status" value="1"/>
</dbReference>
<dbReference type="PANTHER" id="PTHR43463">
    <property type="entry name" value="NICOTINATE-NUCLEOTIDE--DIMETHYLBENZIMIDAZOLE PHOSPHORIBOSYLTRANSFERASE"/>
    <property type="match status" value="1"/>
</dbReference>
<dbReference type="PANTHER" id="PTHR43463:SF1">
    <property type="entry name" value="NICOTINATE-NUCLEOTIDE--DIMETHYLBENZIMIDAZOLE PHOSPHORIBOSYLTRANSFERASE"/>
    <property type="match status" value="1"/>
</dbReference>
<dbReference type="Pfam" id="PF02277">
    <property type="entry name" value="DBI_PRT"/>
    <property type="match status" value="1"/>
</dbReference>
<dbReference type="SUPFAM" id="SSF52733">
    <property type="entry name" value="Nicotinate mononucleotide:5,6-dimethylbenzimidazole phosphoribosyltransferase (CobT)"/>
    <property type="match status" value="1"/>
</dbReference>
<reference key="1">
    <citation type="journal article" date="2007" name="J. Bacteriol.">
        <title>The genome sequence of avian pathogenic Escherichia coli strain O1:K1:H7 shares strong similarities with human extraintestinal pathogenic E. coli genomes.</title>
        <authorList>
            <person name="Johnson T.J."/>
            <person name="Kariyawasam S."/>
            <person name="Wannemuehler Y."/>
            <person name="Mangiamele P."/>
            <person name="Johnson S.J."/>
            <person name="Doetkott C."/>
            <person name="Skyberg J.A."/>
            <person name="Lynne A.M."/>
            <person name="Johnson J.R."/>
            <person name="Nolan L.K."/>
        </authorList>
    </citation>
    <scope>NUCLEOTIDE SEQUENCE [LARGE SCALE GENOMIC DNA]</scope>
</reference>
<evidence type="ECO:0000255" key="1">
    <source>
        <dbReference type="HAMAP-Rule" id="MF_00230"/>
    </source>
</evidence>
<name>COBT_ECOK1</name>
<comment type="function">
    <text evidence="1">Catalyzes the synthesis of alpha-ribazole-5'-phosphate from nicotinate mononucleotide (NAMN) and 5,6-dimethylbenzimidazole (DMB).</text>
</comment>
<comment type="catalytic activity">
    <reaction evidence="1">
        <text>5,6-dimethylbenzimidazole + nicotinate beta-D-ribonucleotide = alpha-ribazole 5'-phosphate + nicotinate + H(+)</text>
        <dbReference type="Rhea" id="RHEA:11196"/>
        <dbReference type="ChEBI" id="CHEBI:15378"/>
        <dbReference type="ChEBI" id="CHEBI:15890"/>
        <dbReference type="ChEBI" id="CHEBI:32544"/>
        <dbReference type="ChEBI" id="CHEBI:57502"/>
        <dbReference type="ChEBI" id="CHEBI:57918"/>
        <dbReference type="EC" id="2.4.2.21"/>
    </reaction>
</comment>
<comment type="pathway">
    <text evidence="1">Nucleoside biosynthesis; alpha-ribazole biosynthesis; alpha-ribazole from 5,6-dimethylbenzimidazole: step 1/2.</text>
</comment>
<comment type="subunit">
    <text evidence="1">Homodimer.</text>
</comment>
<comment type="similarity">
    <text evidence="1">Belongs to the CobT family.</text>
</comment>
<proteinExistence type="inferred from homology"/>
<protein>
    <recommendedName>
        <fullName evidence="1">Nicotinate-nucleotide--dimethylbenzimidazole phosphoribosyltransferase</fullName>
        <shortName evidence="1">NN:DBI PRT</shortName>
        <ecNumber evidence="1">2.4.2.21</ecNumber>
    </recommendedName>
    <alternativeName>
        <fullName evidence="1">N(1)-alpha-phosphoribosyltransferase</fullName>
    </alternativeName>
</protein>
<keyword id="KW-0169">Cobalamin biosynthesis</keyword>
<keyword id="KW-0328">Glycosyltransferase</keyword>
<keyword id="KW-1185">Reference proteome</keyword>
<keyword id="KW-0808">Transferase</keyword>
<accession>A1ACI8</accession>
<gene>
    <name evidence="1" type="primary">cobT</name>
    <name type="ordered locus">Ecok1_18840</name>
    <name type="ORF">APECO1_1072</name>
</gene>
<sequence>MQTLANLLNTIPAIDPAAMSRAQRHIDGLLKPVGSLGRLEALGVQLAGMPGLNGIPHVGKKAVLVMCADHGVWEEGVAISPKEVTAIQAENMTRGTTGVCVLAAQAGANVHVIDVGIDTAEPIPGLINMRVARGSGNIASAPAMSRRQAEKLLLDVICYTRELAKNGVTLFGVGELGMANTTPAAAIVSTITGRDPEEVVGIGANLPTDKLANKIDVVRRAITLNQPNPQDGVNVLAKVGGFDLVGMAGVMLGAASCGLPVLLDGFLSYAAALAACQMSPAIKPYLIPSHLSAEKGARIALSHLGLEPFLNMDMRLGEGSGAALAMPIIEAACAIYNNMGELAASKIVLPGNTTSDLNS</sequence>
<feature type="chain" id="PRO_1000021594" description="Nicotinate-nucleotide--dimethylbenzimidazole phosphoribosyltransferase">
    <location>
        <begin position="1"/>
        <end position="359"/>
    </location>
</feature>
<feature type="active site" description="Proton acceptor" evidence="1">
    <location>
        <position position="318"/>
    </location>
</feature>